<keyword id="KW-0963">Cytoplasm</keyword>
<keyword id="KW-0539">Nucleus</keyword>
<keyword id="KW-1185">Reference proteome</keyword>
<keyword id="KW-0677">Repeat</keyword>
<keyword id="KW-0694">RNA-binding</keyword>
<gene>
    <name type="primary">PDCD4</name>
</gene>
<accession>Q98TX3</accession>
<proteinExistence type="evidence at transcript level"/>
<sequence length="467" mass="51708">MEIEKQHVYISTVEVENLSDALFSGDEENGGSEERKTEINGNWIPATSITEAKINAKAKRRLRKNSSRDSGRGDSVSENGETQKAGLVVPTSPKGKVLDRRSRSGKGRGLPKKGGAGGKGVWGTPGQVYDVEEVDIKDPNYDDDQENCVYETVVLPLDERAFEKTLTPIIQEYFEHGDTNEVSEMLKDLNLGEMKYSVPVLAVSLALEGKASHREMTSKLISDLCGTVVSKTDVEKSFDKLLKDLPDLVLDSPRAPQLVGQFIARAVGDGILSSTYIDGYKGTVDSIQARAALDRATVLLSVTKGGKRIDNVWGSGGGQQSVKHLVKEIDMLLKEYLLSGDLLEAERCLQELEVPHFHHELVYEAIVMVLESTGEKTFKMMLDLLKSLSRSSVITMDQMKRGYERVYCEIPDINLDVPHSYSVLERFVEECFQAGIISKPLRDLCPSRGRKRFVSEGDGGRLKPESY</sequence>
<comment type="function">
    <text evidence="1 5">Inhibits translation initiation and cap-dependent translation. May excert its function by hindering the interaction between EIF4A and EIF4G. Inhibits the helicase activity of EIF4A. Binds RNA (By similarity). Does not seem to be involved in apoptosis.</text>
</comment>
<comment type="subunit">
    <text evidence="1">Interacts with EIF4A.</text>
</comment>
<comment type="subcellular location">
    <subcellularLocation>
        <location evidence="5">Nucleus</location>
    </subcellularLocation>
    <subcellularLocation>
        <location evidence="5">Cytoplasm</location>
    </subcellularLocation>
    <text>Shuttles between the nucleus and cytoplasm. Predominantly nuclear under normal growth conditions.</text>
</comment>
<comment type="tissue specificity">
    <text evidence="5">Expressed in a broad spectrum of hematopoietic organs, such as thymus and bursa. Lower levels of expression detected in the kidney.</text>
</comment>
<comment type="induction">
    <text evidence="5">Up-regulated by viral v-myb.</text>
</comment>
<comment type="similarity">
    <text evidence="6">Belongs to the PDCD4 family.</text>
</comment>
<reference key="1">
    <citation type="journal article" date="2001" name="Oncogene">
        <title>The chicken Pdcd4 gene is regulated by v-Myb.</title>
        <authorList>
            <person name="Schlichter U."/>
            <person name="Burk O."/>
            <person name="Worpenberg S."/>
            <person name="Klempnauer K.-H."/>
        </authorList>
    </citation>
    <scope>NUCLEOTIDE SEQUENCE [MRNA]</scope>
    <scope>FUNCTION</scope>
    <scope>INDUCTION</scope>
    <scope>TISSUE SPECIFICITY</scope>
    <scope>SUBCELLULAR LOCATION</scope>
</reference>
<feature type="chain" id="PRO_0000256523" description="Programmed cell death protein 4">
    <location>
        <begin position="1"/>
        <end position="467"/>
    </location>
</feature>
<feature type="domain" description="MI 1" evidence="3">
    <location>
        <begin position="161"/>
        <end position="282"/>
    </location>
</feature>
<feature type="domain" description="MI 2" evidence="3">
    <location>
        <begin position="324"/>
        <end position="447"/>
    </location>
</feature>
<feature type="region of interest" description="Disordered" evidence="4">
    <location>
        <begin position="21"/>
        <end position="43"/>
    </location>
</feature>
<feature type="region of interest" description="Disordered" evidence="4">
    <location>
        <begin position="57"/>
        <end position="124"/>
    </location>
</feature>
<feature type="short sequence motif" description="Nuclear localization signal" evidence="2">
    <location>
        <begin position="57"/>
        <end position="63"/>
    </location>
</feature>
<feature type="short sequence motif" description="Nuclear localization signal" evidence="2">
    <location>
        <begin position="446"/>
        <end position="452"/>
    </location>
</feature>
<feature type="compositionally biased region" description="Gly residues" evidence="4">
    <location>
        <begin position="112"/>
        <end position="123"/>
    </location>
</feature>
<dbReference type="EMBL" id="AF321288">
    <property type="protein sequence ID" value="AAK09354.1"/>
    <property type="molecule type" value="mRNA"/>
</dbReference>
<dbReference type="RefSeq" id="NP_989635.1">
    <property type="nucleotide sequence ID" value="NM_204304.1"/>
</dbReference>
<dbReference type="SMR" id="Q98TX3"/>
<dbReference type="FunCoup" id="Q98TX3">
    <property type="interactions" value="2614"/>
</dbReference>
<dbReference type="STRING" id="9031.ENSGALP00000069409"/>
<dbReference type="GlyGen" id="Q98TX3">
    <property type="glycosylation" value="1 site"/>
</dbReference>
<dbReference type="PaxDb" id="9031-ENSGALP00000014143"/>
<dbReference type="GeneID" id="374191"/>
<dbReference type="KEGG" id="gga:374191"/>
<dbReference type="CTD" id="27250"/>
<dbReference type="VEuPathDB" id="HostDB:geneid_374191"/>
<dbReference type="eggNOG" id="KOG0403">
    <property type="taxonomic scope" value="Eukaryota"/>
</dbReference>
<dbReference type="InParanoid" id="Q98TX3"/>
<dbReference type="OrthoDB" id="414546at2759"/>
<dbReference type="PhylomeDB" id="Q98TX3"/>
<dbReference type="PRO" id="PR:Q98TX3"/>
<dbReference type="Proteomes" id="UP000000539">
    <property type="component" value="Unassembled WGS sequence"/>
</dbReference>
<dbReference type="GO" id="GO:0005737">
    <property type="term" value="C:cytoplasm"/>
    <property type="evidence" value="ECO:0000250"/>
    <property type="project" value="UniProtKB"/>
</dbReference>
<dbReference type="GO" id="GO:0005829">
    <property type="term" value="C:cytosol"/>
    <property type="evidence" value="ECO:0000250"/>
    <property type="project" value="UniProtKB"/>
</dbReference>
<dbReference type="GO" id="GO:0005634">
    <property type="term" value="C:nucleus"/>
    <property type="evidence" value="ECO:0000315"/>
    <property type="project" value="UniProtKB"/>
</dbReference>
<dbReference type="GO" id="GO:0003723">
    <property type="term" value="F:RNA binding"/>
    <property type="evidence" value="ECO:0007669"/>
    <property type="project" value="UniProtKB-KW"/>
</dbReference>
<dbReference type="GO" id="GO:0045892">
    <property type="term" value="P:negative regulation of DNA-templated transcription"/>
    <property type="evidence" value="ECO:0000314"/>
    <property type="project" value="UniProtKB"/>
</dbReference>
<dbReference type="GO" id="GO:0043508">
    <property type="term" value="P:negative regulation of JUN kinase activity"/>
    <property type="evidence" value="ECO:0000314"/>
    <property type="project" value="UniProtKB"/>
</dbReference>
<dbReference type="FunFam" id="1.25.40.180:FF:000008">
    <property type="entry name" value="Programmed cell death protein 4"/>
    <property type="match status" value="1"/>
</dbReference>
<dbReference type="FunFam" id="1.25.40.180:FF:000009">
    <property type="entry name" value="programmed cell death protein 4"/>
    <property type="match status" value="1"/>
</dbReference>
<dbReference type="Gene3D" id="1.25.40.180">
    <property type="match status" value="2"/>
</dbReference>
<dbReference type="InterPro" id="IPR016024">
    <property type="entry name" value="ARM-type_fold"/>
</dbReference>
<dbReference type="InterPro" id="IPR003891">
    <property type="entry name" value="Initiation_fac_eIF4g_MI"/>
</dbReference>
<dbReference type="InterPro" id="IPR039778">
    <property type="entry name" value="PDCD4"/>
</dbReference>
<dbReference type="PANTHER" id="PTHR12626">
    <property type="entry name" value="PROGRAMMED CELL DEATH 4"/>
    <property type="match status" value="1"/>
</dbReference>
<dbReference type="PANTHER" id="PTHR12626:SF3">
    <property type="entry name" value="PROGRAMMED CELL DEATH PROTEIN 4"/>
    <property type="match status" value="1"/>
</dbReference>
<dbReference type="Pfam" id="PF02847">
    <property type="entry name" value="MA3"/>
    <property type="match status" value="2"/>
</dbReference>
<dbReference type="SMART" id="SM00544">
    <property type="entry name" value="MA3"/>
    <property type="match status" value="2"/>
</dbReference>
<dbReference type="SUPFAM" id="SSF48371">
    <property type="entry name" value="ARM repeat"/>
    <property type="match status" value="2"/>
</dbReference>
<dbReference type="PROSITE" id="PS51366">
    <property type="entry name" value="MI"/>
    <property type="match status" value="2"/>
</dbReference>
<name>PDCD4_CHICK</name>
<organism>
    <name type="scientific">Gallus gallus</name>
    <name type="common">Chicken</name>
    <dbReference type="NCBI Taxonomy" id="9031"/>
    <lineage>
        <taxon>Eukaryota</taxon>
        <taxon>Metazoa</taxon>
        <taxon>Chordata</taxon>
        <taxon>Craniata</taxon>
        <taxon>Vertebrata</taxon>
        <taxon>Euteleostomi</taxon>
        <taxon>Archelosauria</taxon>
        <taxon>Archosauria</taxon>
        <taxon>Dinosauria</taxon>
        <taxon>Saurischia</taxon>
        <taxon>Theropoda</taxon>
        <taxon>Coelurosauria</taxon>
        <taxon>Aves</taxon>
        <taxon>Neognathae</taxon>
        <taxon>Galloanserae</taxon>
        <taxon>Galliformes</taxon>
        <taxon>Phasianidae</taxon>
        <taxon>Phasianinae</taxon>
        <taxon>Gallus</taxon>
    </lineage>
</organism>
<evidence type="ECO:0000250" key="1"/>
<evidence type="ECO:0000255" key="2"/>
<evidence type="ECO:0000255" key="3">
    <source>
        <dbReference type="PROSITE-ProRule" id="PRU00698"/>
    </source>
</evidence>
<evidence type="ECO:0000256" key="4">
    <source>
        <dbReference type="SAM" id="MobiDB-lite"/>
    </source>
</evidence>
<evidence type="ECO:0000269" key="5">
    <source>
    </source>
</evidence>
<evidence type="ECO:0000305" key="6"/>
<protein>
    <recommendedName>
        <fullName>Programmed cell death protein 4</fullName>
    </recommendedName>
    <alternativeName>
        <fullName>Protein I11/6</fullName>
    </alternativeName>
</protein>